<feature type="chain" id="PRO_0000114924" description="U11/U12 small nuclear ribonucleoprotein 25 kDa protein">
    <location>
        <begin position="1"/>
        <end position="132"/>
    </location>
</feature>
<feature type="domain" description="Ubiquitin-like" evidence="1">
    <location>
        <begin position="41"/>
        <end position="132"/>
    </location>
</feature>
<feature type="sequence conflict" description="In Ref. 1; BAB15505." evidence="3" ref="1">
    <original>T</original>
    <variation>A</variation>
    <location>
        <position position="106"/>
    </location>
</feature>
<keyword id="KW-0002">3D-structure</keyword>
<keyword id="KW-0507">mRNA processing</keyword>
<keyword id="KW-0508">mRNA splicing</keyword>
<keyword id="KW-0539">Nucleus</keyword>
<keyword id="KW-1267">Proteomics identification</keyword>
<keyword id="KW-1185">Reference proteome</keyword>
<keyword id="KW-0747">Spliceosome</keyword>
<accession>Q9BV90</accession>
<accession>Q1W6H3</accession>
<accession>Q6IEF8</accession>
<accession>Q9H5W4</accession>
<name>SNR25_HUMAN</name>
<proteinExistence type="evidence at protein level"/>
<dbReference type="EMBL" id="AK026593">
    <property type="protein sequence ID" value="BAB15505.1"/>
    <property type="molecule type" value="mRNA"/>
</dbReference>
<dbReference type="EMBL" id="DQ431198">
    <property type="protein sequence ID" value="ABD95904.1"/>
    <property type="molecule type" value="Genomic_DNA"/>
</dbReference>
<dbReference type="EMBL" id="AE006462">
    <property type="protein sequence ID" value="AAK61211.1"/>
    <property type="molecule type" value="Genomic_DNA"/>
</dbReference>
<dbReference type="EMBL" id="BC001381">
    <property type="protein sequence ID" value="AAH01381.1"/>
    <property type="molecule type" value="mRNA"/>
</dbReference>
<dbReference type="EMBL" id="BC009179">
    <property type="protein sequence ID" value="AAH09179.1"/>
    <property type="molecule type" value="mRNA"/>
</dbReference>
<dbReference type="EMBL" id="BK005201">
    <property type="protein sequence ID" value="DAA05499.1"/>
    <property type="molecule type" value="mRNA"/>
</dbReference>
<dbReference type="RefSeq" id="NP_078847.1">
    <property type="nucleotide sequence ID" value="NM_024571.3"/>
</dbReference>
<dbReference type="PDB" id="8R7N">
    <property type="method" value="EM"/>
    <property type="resolution" value="3.40 A"/>
    <property type="chains" value="B=1-132"/>
</dbReference>
<dbReference type="PDB" id="8Y6O">
    <property type="method" value="EM"/>
    <property type="resolution" value="3.38 A"/>
    <property type="chains" value="X=1-132"/>
</dbReference>
<dbReference type="PDB" id="9GBW">
    <property type="method" value="EM"/>
    <property type="resolution" value="3.50 A"/>
    <property type="chains" value="B=1-132"/>
</dbReference>
<dbReference type="PDB" id="9GBZ">
    <property type="method" value="EM"/>
    <property type="resolution" value="3.40 A"/>
    <property type="chains" value="B=1-132"/>
</dbReference>
<dbReference type="PDB" id="9GCM">
    <property type="method" value="EM"/>
    <property type="resolution" value="3.10 A"/>
    <property type="chains" value="B=1-132"/>
</dbReference>
<dbReference type="PDBsum" id="8R7N"/>
<dbReference type="PDBsum" id="8Y6O"/>
<dbReference type="PDBsum" id="9GBW"/>
<dbReference type="PDBsum" id="9GBZ"/>
<dbReference type="PDBsum" id="9GCM"/>
<dbReference type="EMDB" id="EMD-18984"/>
<dbReference type="EMDB" id="EMD-38993"/>
<dbReference type="EMDB" id="EMD-51223"/>
<dbReference type="EMDB" id="EMD-51225"/>
<dbReference type="EMDB" id="EMD-51234"/>
<dbReference type="SMR" id="Q9BV90"/>
<dbReference type="BioGRID" id="122752">
    <property type="interactions" value="37"/>
</dbReference>
<dbReference type="CORUM" id="Q9BV90"/>
<dbReference type="FunCoup" id="Q9BV90">
    <property type="interactions" value="1588"/>
</dbReference>
<dbReference type="IntAct" id="Q9BV90">
    <property type="interactions" value="25"/>
</dbReference>
<dbReference type="MINT" id="Q9BV90"/>
<dbReference type="STRING" id="9606.ENSP00000372482"/>
<dbReference type="iPTMnet" id="Q9BV90"/>
<dbReference type="PhosphoSitePlus" id="Q9BV90"/>
<dbReference type="BioMuta" id="SNRNP25"/>
<dbReference type="DMDM" id="68052377"/>
<dbReference type="jPOST" id="Q9BV90"/>
<dbReference type="MassIVE" id="Q9BV90"/>
<dbReference type="PaxDb" id="9606-ENSP00000372482"/>
<dbReference type="ProteomicsDB" id="79183"/>
<dbReference type="Pumba" id="Q9BV90"/>
<dbReference type="Antibodypedia" id="22444">
    <property type="antibodies" value="47 antibodies from 13 providers"/>
</dbReference>
<dbReference type="DNASU" id="79622"/>
<dbReference type="GeneID" id="79622"/>
<dbReference type="KEGG" id="hsa:79622"/>
<dbReference type="UCSC" id="uc059ofp.1">
    <property type="organism name" value="human"/>
</dbReference>
<dbReference type="AGR" id="HGNC:14161"/>
<dbReference type="CTD" id="79622"/>
<dbReference type="DisGeNET" id="79622"/>
<dbReference type="GeneCards" id="SNRNP25"/>
<dbReference type="HGNC" id="HGNC:14161">
    <property type="gene designation" value="SNRNP25"/>
</dbReference>
<dbReference type="HPA" id="ENSG00000161981">
    <property type="expression patterns" value="Tissue enhanced (skeletal)"/>
</dbReference>
<dbReference type="neXtProt" id="NX_Q9BV90"/>
<dbReference type="PharmGKB" id="PA164726099"/>
<dbReference type="VEuPathDB" id="HostDB:ENSG00000161981"/>
<dbReference type="eggNOG" id="ENOG502RXSI">
    <property type="taxonomic scope" value="Eukaryota"/>
</dbReference>
<dbReference type="InParanoid" id="Q9BV90"/>
<dbReference type="OrthoDB" id="72819at2759"/>
<dbReference type="PAN-GO" id="Q9BV90">
    <property type="GO annotations" value="1 GO annotation based on evolutionary models"/>
</dbReference>
<dbReference type="PhylomeDB" id="Q9BV90"/>
<dbReference type="TreeFam" id="TF329506"/>
<dbReference type="PathwayCommons" id="Q9BV90"/>
<dbReference type="Reactome" id="R-HSA-72165">
    <property type="pathway name" value="mRNA Splicing - Minor Pathway"/>
</dbReference>
<dbReference type="SignaLink" id="Q9BV90"/>
<dbReference type="BioGRID-ORCS" id="79622">
    <property type="hits" value="785 hits in 1101 CRISPR screens"/>
</dbReference>
<dbReference type="ChiTaRS" id="SNRNP25">
    <property type="organism name" value="human"/>
</dbReference>
<dbReference type="GenomeRNAi" id="79622"/>
<dbReference type="Pharos" id="Q9BV90">
    <property type="development level" value="Tdark"/>
</dbReference>
<dbReference type="PRO" id="PR:Q9BV90"/>
<dbReference type="Proteomes" id="UP000005640">
    <property type="component" value="Chromosome 16"/>
</dbReference>
<dbReference type="RNAct" id="Q9BV90">
    <property type="molecule type" value="protein"/>
</dbReference>
<dbReference type="Bgee" id="ENSG00000161981">
    <property type="expression patterns" value="Expressed in pons and 196 other cell types or tissues"/>
</dbReference>
<dbReference type="ExpressionAtlas" id="Q9BV90">
    <property type="expression patterns" value="baseline and differential"/>
</dbReference>
<dbReference type="GO" id="GO:0005829">
    <property type="term" value="C:cytosol"/>
    <property type="evidence" value="ECO:0000314"/>
    <property type="project" value="HPA"/>
</dbReference>
<dbReference type="GO" id="GO:0045171">
    <property type="term" value="C:intercellular bridge"/>
    <property type="evidence" value="ECO:0000314"/>
    <property type="project" value="HPA"/>
</dbReference>
<dbReference type="GO" id="GO:0005654">
    <property type="term" value="C:nucleoplasm"/>
    <property type="evidence" value="ECO:0000314"/>
    <property type="project" value="HPA"/>
</dbReference>
<dbReference type="GO" id="GO:0005634">
    <property type="term" value="C:nucleus"/>
    <property type="evidence" value="ECO:0000314"/>
    <property type="project" value="MGI"/>
</dbReference>
<dbReference type="GO" id="GO:0005689">
    <property type="term" value="C:U12-type spliceosomal complex"/>
    <property type="evidence" value="ECO:0000314"/>
    <property type="project" value="HGNC-UCL"/>
</dbReference>
<dbReference type="GO" id="GO:0000398">
    <property type="term" value="P:mRNA splicing, via spliceosome"/>
    <property type="evidence" value="ECO:0007669"/>
    <property type="project" value="InterPro"/>
</dbReference>
<dbReference type="GO" id="GO:0008380">
    <property type="term" value="P:RNA splicing"/>
    <property type="evidence" value="ECO:0000305"/>
    <property type="project" value="HGNC-UCL"/>
</dbReference>
<dbReference type="CDD" id="cd17058">
    <property type="entry name" value="Ubl_SNRNP25"/>
    <property type="match status" value="1"/>
</dbReference>
<dbReference type="FunFam" id="3.10.20.90:FF:000194">
    <property type="entry name" value="U11/U12 small nuclear ribonucleoprotein 25 kDa protein"/>
    <property type="match status" value="1"/>
</dbReference>
<dbReference type="Gene3D" id="3.10.20.90">
    <property type="entry name" value="Phosphatidylinositol 3-kinase Catalytic Subunit, Chain A, domain 1"/>
    <property type="match status" value="1"/>
</dbReference>
<dbReference type="InterPro" id="IPR039690">
    <property type="entry name" value="SNRNP25"/>
</dbReference>
<dbReference type="InterPro" id="IPR040610">
    <property type="entry name" value="SNRNP25_ubiquitin"/>
</dbReference>
<dbReference type="InterPro" id="IPR000626">
    <property type="entry name" value="Ubiquitin-like_dom"/>
</dbReference>
<dbReference type="InterPro" id="IPR029071">
    <property type="entry name" value="Ubiquitin-like_domsf"/>
</dbReference>
<dbReference type="PANTHER" id="PTHR14942">
    <property type="entry name" value="U11/U12 SMALL NUCLEAR RIBONUCLEOPROTEIN 25 KDA PROTEIN"/>
    <property type="match status" value="1"/>
</dbReference>
<dbReference type="PANTHER" id="PTHR14942:SF0">
    <property type="entry name" value="U11_U12 SMALL NUCLEAR RIBONUCLEOPROTEIN 25 KDA PROTEIN"/>
    <property type="match status" value="1"/>
</dbReference>
<dbReference type="Pfam" id="PF18036">
    <property type="entry name" value="Ubiquitin_4"/>
    <property type="match status" value="1"/>
</dbReference>
<dbReference type="SUPFAM" id="SSF54236">
    <property type="entry name" value="Ubiquitin-like"/>
    <property type="match status" value="1"/>
</dbReference>
<dbReference type="PROSITE" id="PS50053">
    <property type="entry name" value="UBIQUITIN_2"/>
    <property type="match status" value="1"/>
</dbReference>
<comment type="subunit">
    <text evidence="2">Component of the U11/U12 snRNPs that are part of the U12-type spliceosome.</text>
</comment>
<comment type="interaction">
    <interactant intactId="EBI-9675976">
        <id>Q9BV90</id>
    </interactant>
    <interactant intactId="EBI-953896">
        <id>Q9NP55</id>
        <label>BPIFA1</label>
    </interactant>
    <organismsDiffer>false</organismsDiffer>
    <experiments>3</experiments>
</comment>
<comment type="interaction">
    <interactant intactId="EBI-9675976">
        <id>Q9BV90</id>
    </interactant>
    <interactant intactId="EBI-746909">
        <id>Q8N684</id>
        <label>CPSF7</label>
    </interactant>
    <organismsDiffer>false</organismsDiffer>
    <experiments>3</experiments>
</comment>
<comment type="interaction">
    <interactant intactId="EBI-9675976">
        <id>Q9BV90</id>
    </interactant>
    <interactant intactId="EBI-11523759">
        <id>Q8N684-3</id>
        <label>CPSF7</label>
    </interactant>
    <organismsDiffer>false</organismsDiffer>
    <experiments>3</experiments>
</comment>
<comment type="interaction">
    <interactant intactId="EBI-9675976">
        <id>Q9BV90</id>
    </interactant>
    <interactant intactId="EBI-2349927">
        <id>Q5JST6</id>
        <label>EFHC2</label>
    </interactant>
    <organismsDiffer>false</organismsDiffer>
    <experiments>6</experiments>
</comment>
<comment type="interaction">
    <interactant intactId="EBI-9675976">
        <id>Q9BV90</id>
    </interactant>
    <interactant intactId="EBI-948001">
        <id>Q15323</id>
        <label>KRT31</label>
    </interactant>
    <organismsDiffer>false</organismsDiffer>
    <experiments>3</experiments>
</comment>
<comment type="interaction">
    <interactant intactId="EBI-9675976">
        <id>Q9BV90</id>
    </interactant>
    <interactant intactId="EBI-12039345">
        <id>Q9UBR4-2</id>
        <label>LHX3</label>
    </interactant>
    <organismsDiffer>false</organismsDiffer>
    <experiments>7</experiments>
</comment>
<comment type="interaction">
    <interactant intactId="EBI-9675976">
        <id>Q9BV90</id>
    </interactant>
    <interactant intactId="EBI-2865388">
        <id>Q969G2</id>
        <label>LHX4</label>
    </interactant>
    <organismsDiffer>false</organismsDiffer>
    <experiments>6</experiments>
</comment>
<comment type="interaction">
    <interactant intactId="EBI-9675976">
        <id>Q9BV90</id>
    </interactant>
    <interactant intactId="EBI-739832">
        <id>Q8TBB1</id>
        <label>LNX1</label>
    </interactant>
    <organismsDiffer>false</organismsDiffer>
    <experiments>3</experiments>
</comment>
<comment type="interaction">
    <interactant intactId="EBI-9675976">
        <id>Q9BV90</id>
    </interactant>
    <interactant intactId="EBI-3920396">
        <id>Q6ZUT1</id>
        <label>NKAPD1</label>
    </interactant>
    <organismsDiffer>false</organismsDiffer>
    <experiments>3</experiments>
</comment>
<comment type="interaction">
    <interactant intactId="EBI-9675976">
        <id>Q9BV90</id>
    </interactant>
    <interactant intactId="EBI-536879">
        <id>O43482</id>
        <label>OIP5</label>
    </interactant>
    <organismsDiffer>false</organismsDiffer>
    <experiments>3</experiments>
</comment>
<comment type="interaction">
    <interactant intactId="EBI-9675976">
        <id>Q9BV90</id>
    </interactant>
    <interactant intactId="EBI-357275">
        <id>Q99471</id>
        <label>PFDN5</label>
    </interactant>
    <organismsDiffer>false</organismsDiffer>
    <experiments>3</experiments>
</comment>
<comment type="interaction">
    <interactant intactId="EBI-9675976">
        <id>Q9BV90</id>
    </interactant>
    <interactant intactId="EBI-79165">
        <id>Q9NRD5</id>
        <label>PICK1</label>
    </interactant>
    <organismsDiffer>false</organismsDiffer>
    <experiments>3</experiments>
</comment>
<comment type="interaction">
    <interactant intactId="EBI-9675976">
        <id>Q9BV90</id>
    </interactant>
    <interactant intactId="EBI-307352">
        <id>Q04864</id>
        <label>REL</label>
    </interactant>
    <organismsDiffer>false</organismsDiffer>
    <experiments>3</experiments>
</comment>
<comment type="interaction">
    <interactant intactId="EBI-9675976">
        <id>Q9BV90</id>
    </interactant>
    <interactant intactId="EBI-10829018">
        <id>Q04864-2</id>
        <label>REL</label>
    </interactant>
    <organismsDiffer>false</organismsDiffer>
    <experiments>3</experiments>
</comment>
<comment type="interaction">
    <interactant intactId="EBI-9675976">
        <id>Q9BV90</id>
    </interactant>
    <interactant intactId="EBI-12842466">
        <id>Q9Y2W6</id>
        <label>TDRKH</label>
    </interactant>
    <organismsDiffer>false</organismsDiffer>
    <experiments>3</experiments>
</comment>
<comment type="interaction">
    <interactant intactId="EBI-9675976">
        <id>Q9BV90</id>
    </interactant>
    <interactant intactId="EBI-11139477">
        <id>Q96N21</id>
        <label>TEPSIN</label>
    </interactant>
    <organismsDiffer>false</organismsDiffer>
    <experiments>3</experiments>
</comment>
<comment type="interaction">
    <interactant intactId="EBI-9675976">
        <id>Q9BV90</id>
    </interactant>
    <interactant intactId="EBI-359224">
        <id>Q13077</id>
        <label>TRAF1</label>
    </interactant>
    <organismsDiffer>false</organismsDiffer>
    <experiments>3</experiments>
</comment>
<comment type="interaction">
    <interactant intactId="EBI-9675976">
        <id>Q9BV90</id>
    </interactant>
    <interactant intactId="EBI-355744">
        <id>Q12933</id>
        <label>TRAF2</label>
    </interactant>
    <organismsDiffer>false</organismsDiffer>
    <experiments>3</experiments>
</comment>
<comment type="subcellular location">
    <subcellularLocation>
        <location evidence="2">Nucleus</location>
    </subcellularLocation>
</comment>
<comment type="caution">
    <text evidence="3">It is uncertain whether Met-1 or Met-10 is the initiator.</text>
</comment>
<gene>
    <name type="primary">SNRNP25</name>
    <name type="synonym">C16orf33</name>
</gene>
<evidence type="ECO:0000255" key="1">
    <source>
        <dbReference type="PROSITE-ProRule" id="PRU00214"/>
    </source>
</evidence>
<evidence type="ECO:0000269" key="2">
    <source>
    </source>
</evidence>
<evidence type="ECO:0000305" key="3"/>
<organism>
    <name type="scientific">Homo sapiens</name>
    <name type="common">Human</name>
    <dbReference type="NCBI Taxonomy" id="9606"/>
    <lineage>
        <taxon>Eukaryota</taxon>
        <taxon>Metazoa</taxon>
        <taxon>Chordata</taxon>
        <taxon>Craniata</taxon>
        <taxon>Vertebrata</taxon>
        <taxon>Euteleostomi</taxon>
        <taxon>Mammalia</taxon>
        <taxon>Eutheria</taxon>
        <taxon>Euarchontoglires</taxon>
        <taxon>Primates</taxon>
        <taxon>Haplorrhini</taxon>
        <taxon>Catarrhini</taxon>
        <taxon>Hominidae</taxon>
        <taxon>Homo</taxon>
    </lineage>
</organism>
<sequence length="132" mass="15270">MDVFQEGLAMVVQDPLLCDLPIQVTLEEVNSQIALEYGQAMTVRVCKMDGEVMPVVVVQSATVLDLKKAIQRYVQLKQEREGGIQHISWSYVWRTYHLTSAGEKLTEDRKKLRDYGIRNRDEVSFIKKLRQK</sequence>
<protein>
    <recommendedName>
        <fullName>U11/U12 small nuclear ribonucleoprotein 25 kDa protein</fullName>
        <shortName>U11/U12 snRNP 25 kDa protein</shortName>
        <shortName>U11/U12-25K</shortName>
    </recommendedName>
    <alternativeName>
        <fullName>Minus-99 protein</fullName>
    </alternativeName>
</protein>
<reference key="1">
    <citation type="journal article" date="2004" name="Nat. Genet.">
        <title>Complete sequencing and characterization of 21,243 full-length human cDNAs.</title>
        <authorList>
            <person name="Ota T."/>
            <person name="Suzuki Y."/>
            <person name="Nishikawa T."/>
            <person name="Otsuki T."/>
            <person name="Sugiyama T."/>
            <person name="Irie R."/>
            <person name="Wakamatsu A."/>
            <person name="Hayashi K."/>
            <person name="Sato H."/>
            <person name="Nagai K."/>
            <person name="Kimura K."/>
            <person name="Makita H."/>
            <person name="Sekine M."/>
            <person name="Obayashi M."/>
            <person name="Nishi T."/>
            <person name="Shibahara T."/>
            <person name="Tanaka T."/>
            <person name="Ishii S."/>
            <person name="Yamamoto J."/>
            <person name="Saito K."/>
            <person name="Kawai Y."/>
            <person name="Isono Y."/>
            <person name="Nakamura Y."/>
            <person name="Nagahari K."/>
            <person name="Murakami K."/>
            <person name="Yasuda T."/>
            <person name="Iwayanagi T."/>
            <person name="Wagatsuma M."/>
            <person name="Shiratori A."/>
            <person name="Sudo H."/>
            <person name="Hosoiri T."/>
            <person name="Kaku Y."/>
            <person name="Kodaira H."/>
            <person name="Kondo H."/>
            <person name="Sugawara M."/>
            <person name="Takahashi M."/>
            <person name="Kanda K."/>
            <person name="Yokoi T."/>
            <person name="Furuya T."/>
            <person name="Kikkawa E."/>
            <person name="Omura Y."/>
            <person name="Abe K."/>
            <person name="Kamihara K."/>
            <person name="Katsuta N."/>
            <person name="Sato K."/>
            <person name="Tanikawa M."/>
            <person name="Yamazaki M."/>
            <person name="Ninomiya K."/>
            <person name="Ishibashi T."/>
            <person name="Yamashita H."/>
            <person name="Murakawa K."/>
            <person name="Fujimori K."/>
            <person name="Tanai H."/>
            <person name="Kimata M."/>
            <person name="Watanabe M."/>
            <person name="Hiraoka S."/>
            <person name="Chiba Y."/>
            <person name="Ishida S."/>
            <person name="Ono Y."/>
            <person name="Takiguchi S."/>
            <person name="Watanabe S."/>
            <person name="Yosida M."/>
            <person name="Hotuta T."/>
            <person name="Kusano J."/>
            <person name="Kanehori K."/>
            <person name="Takahashi-Fujii A."/>
            <person name="Hara H."/>
            <person name="Tanase T.-O."/>
            <person name="Nomura Y."/>
            <person name="Togiya S."/>
            <person name="Komai F."/>
            <person name="Hara R."/>
            <person name="Takeuchi K."/>
            <person name="Arita M."/>
            <person name="Imose N."/>
            <person name="Musashino K."/>
            <person name="Yuuki H."/>
            <person name="Oshima A."/>
            <person name="Sasaki N."/>
            <person name="Aotsuka S."/>
            <person name="Yoshikawa Y."/>
            <person name="Matsunawa H."/>
            <person name="Ichihara T."/>
            <person name="Shiohata N."/>
            <person name="Sano S."/>
            <person name="Moriya S."/>
            <person name="Momiyama H."/>
            <person name="Satoh N."/>
            <person name="Takami S."/>
            <person name="Terashima Y."/>
            <person name="Suzuki O."/>
            <person name="Nakagawa S."/>
            <person name="Senoh A."/>
            <person name="Mizoguchi H."/>
            <person name="Goto Y."/>
            <person name="Shimizu F."/>
            <person name="Wakebe H."/>
            <person name="Hishigaki H."/>
            <person name="Watanabe T."/>
            <person name="Sugiyama A."/>
            <person name="Takemoto M."/>
            <person name="Kawakami B."/>
            <person name="Yamazaki M."/>
            <person name="Watanabe K."/>
            <person name="Kumagai A."/>
            <person name="Itakura S."/>
            <person name="Fukuzumi Y."/>
            <person name="Fujimori Y."/>
            <person name="Komiyama M."/>
            <person name="Tashiro H."/>
            <person name="Tanigami A."/>
            <person name="Fujiwara T."/>
            <person name="Ono T."/>
            <person name="Yamada K."/>
            <person name="Fujii Y."/>
            <person name="Ozaki K."/>
            <person name="Hirao M."/>
            <person name="Ohmori Y."/>
            <person name="Kawabata A."/>
            <person name="Hikiji T."/>
            <person name="Kobatake N."/>
            <person name="Inagaki H."/>
            <person name="Ikema Y."/>
            <person name="Okamoto S."/>
            <person name="Okitani R."/>
            <person name="Kawakami T."/>
            <person name="Noguchi S."/>
            <person name="Itoh T."/>
            <person name="Shigeta K."/>
            <person name="Senba T."/>
            <person name="Matsumura K."/>
            <person name="Nakajima Y."/>
            <person name="Mizuno T."/>
            <person name="Morinaga M."/>
            <person name="Sasaki M."/>
            <person name="Togashi T."/>
            <person name="Oyama M."/>
            <person name="Hata H."/>
            <person name="Watanabe M."/>
            <person name="Komatsu T."/>
            <person name="Mizushima-Sugano J."/>
            <person name="Satoh T."/>
            <person name="Shirai Y."/>
            <person name="Takahashi Y."/>
            <person name="Nakagawa K."/>
            <person name="Okumura K."/>
            <person name="Nagase T."/>
            <person name="Nomura N."/>
            <person name="Kikuchi H."/>
            <person name="Masuho Y."/>
            <person name="Yamashita R."/>
            <person name="Nakai K."/>
            <person name="Yada T."/>
            <person name="Nakamura Y."/>
            <person name="Ohara O."/>
            <person name="Isogai T."/>
            <person name="Sugano S."/>
        </authorList>
    </citation>
    <scope>NUCLEOTIDE SEQUENCE [LARGE SCALE MRNA]</scope>
</reference>
<reference key="2">
    <citation type="journal article" date="2006" name="Science">
        <title>A regulatory SNP causes a human genetic disease by creating a new transcriptional promoter.</title>
        <authorList>
            <person name="De Gobbi M."/>
            <person name="Viprakasit V."/>
            <person name="Hughes J.R."/>
            <person name="Fisher C."/>
            <person name="Buckle V.J."/>
            <person name="Ayyub H."/>
            <person name="Gibbons R.J."/>
            <person name="Vernimmen D."/>
            <person name="Yoshinaga Y."/>
            <person name="de Jong P."/>
            <person name="Cheng J.-F."/>
            <person name="Rubin E.M."/>
            <person name="Wood W.G."/>
            <person name="Bowden D."/>
            <person name="Higgs D.R."/>
        </authorList>
    </citation>
    <scope>NUCLEOTIDE SEQUENCE [GENOMIC DNA]</scope>
</reference>
<reference key="3">
    <citation type="journal article" date="2004" name="Nature">
        <title>The sequence and analysis of duplication-rich human chromosome 16.</title>
        <authorList>
            <person name="Martin J."/>
            <person name="Han C."/>
            <person name="Gordon L.A."/>
            <person name="Terry A."/>
            <person name="Prabhakar S."/>
            <person name="She X."/>
            <person name="Xie G."/>
            <person name="Hellsten U."/>
            <person name="Chan Y.M."/>
            <person name="Altherr M."/>
            <person name="Couronne O."/>
            <person name="Aerts A."/>
            <person name="Bajorek E."/>
            <person name="Black S."/>
            <person name="Blumer H."/>
            <person name="Branscomb E."/>
            <person name="Brown N.C."/>
            <person name="Bruno W.J."/>
            <person name="Buckingham J.M."/>
            <person name="Callen D.F."/>
            <person name="Campbell C.S."/>
            <person name="Campbell M.L."/>
            <person name="Campbell E.W."/>
            <person name="Caoile C."/>
            <person name="Challacombe J.F."/>
            <person name="Chasteen L.A."/>
            <person name="Chertkov O."/>
            <person name="Chi H.C."/>
            <person name="Christensen M."/>
            <person name="Clark L.M."/>
            <person name="Cohn J.D."/>
            <person name="Denys M."/>
            <person name="Detter J.C."/>
            <person name="Dickson M."/>
            <person name="Dimitrijevic-Bussod M."/>
            <person name="Escobar J."/>
            <person name="Fawcett J.J."/>
            <person name="Flowers D."/>
            <person name="Fotopulos D."/>
            <person name="Glavina T."/>
            <person name="Gomez M."/>
            <person name="Gonzales E."/>
            <person name="Goodstein D."/>
            <person name="Goodwin L.A."/>
            <person name="Grady D.L."/>
            <person name="Grigoriev I."/>
            <person name="Groza M."/>
            <person name="Hammon N."/>
            <person name="Hawkins T."/>
            <person name="Haydu L."/>
            <person name="Hildebrand C.E."/>
            <person name="Huang W."/>
            <person name="Israni S."/>
            <person name="Jett J."/>
            <person name="Jewett P.B."/>
            <person name="Kadner K."/>
            <person name="Kimball H."/>
            <person name="Kobayashi A."/>
            <person name="Krawczyk M.-C."/>
            <person name="Leyba T."/>
            <person name="Longmire J.L."/>
            <person name="Lopez F."/>
            <person name="Lou Y."/>
            <person name="Lowry S."/>
            <person name="Ludeman T."/>
            <person name="Manohar C.F."/>
            <person name="Mark G.A."/>
            <person name="McMurray K.L."/>
            <person name="Meincke L.J."/>
            <person name="Morgan J."/>
            <person name="Moyzis R.K."/>
            <person name="Mundt M.O."/>
            <person name="Munk A.C."/>
            <person name="Nandkeshwar R.D."/>
            <person name="Pitluck S."/>
            <person name="Pollard M."/>
            <person name="Predki P."/>
            <person name="Parson-Quintana B."/>
            <person name="Ramirez L."/>
            <person name="Rash S."/>
            <person name="Retterer J."/>
            <person name="Ricke D.O."/>
            <person name="Robinson D.L."/>
            <person name="Rodriguez A."/>
            <person name="Salamov A."/>
            <person name="Saunders E.H."/>
            <person name="Scott D."/>
            <person name="Shough T."/>
            <person name="Stallings R.L."/>
            <person name="Stalvey M."/>
            <person name="Sutherland R.D."/>
            <person name="Tapia R."/>
            <person name="Tesmer J.G."/>
            <person name="Thayer N."/>
            <person name="Thompson L.S."/>
            <person name="Tice H."/>
            <person name="Torney D.C."/>
            <person name="Tran-Gyamfi M."/>
            <person name="Tsai M."/>
            <person name="Ulanovsky L.E."/>
            <person name="Ustaszewska A."/>
            <person name="Vo N."/>
            <person name="White P.S."/>
            <person name="Williams A.L."/>
            <person name="Wills P.L."/>
            <person name="Wu J.-R."/>
            <person name="Wu K."/>
            <person name="Yang J."/>
            <person name="DeJong P."/>
            <person name="Bruce D."/>
            <person name="Doggett N.A."/>
            <person name="Deaven L."/>
            <person name="Schmutz J."/>
            <person name="Grimwood J."/>
            <person name="Richardson P."/>
            <person name="Rokhsar D.S."/>
            <person name="Eichler E.E."/>
            <person name="Gilna P."/>
            <person name="Lucas S.M."/>
            <person name="Myers R.M."/>
            <person name="Rubin E.M."/>
            <person name="Pennacchio L.A."/>
        </authorList>
    </citation>
    <scope>NUCLEOTIDE SEQUENCE [LARGE SCALE GENOMIC DNA]</scope>
</reference>
<reference key="4">
    <citation type="journal article" date="2004" name="Genome Res.">
        <title>The status, quality, and expansion of the NIH full-length cDNA project: the Mammalian Gene Collection (MGC).</title>
        <authorList>
            <consortium name="The MGC Project Team"/>
        </authorList>
    </citation>
    <scope>NUCLEOTIDE SEQUENCE [LARGE SCALE MRNA]</scope>
    <source>
        <tissue>Colon</tissue>
        <tissue>Lung</tissue>
    </source>
</reference>
<reference key="5">
    <citation type="journal article" date="2004" name="RNA">
        <title>The human 18S U11/U12 snRNP contains a set of novel proteins not found in the U2-dependent spliceosome.</title>
        <authorList>
            <person name="Will C.L."/>
            <person name="Schneider C."/>
            <person name="Hossbach M."/>
            <person name="Urlaub H."/>
            <person name="Rauhut R."/>
            <person name="Elbashir S."/>
            <person name="Tuschl T."/>
            <person name="Luehrmann R."/>
        </authorList>
    </citation>
    <scope>IDENTIFICATION IN A COMPLEX WITH THE U11/U12 SPLICEOSOME</scope>
    <scope>SUBCELLULAR LOCATION</scope>
    <scope>IDENTIFICATION BY MASS SPECTROMETRY</scope>
</reference>